<comment type="similarity">
    <text evidence="1">Belongs to the UPF0102 family.</text>
</comment>
<reference key="1">
    <citation type="journal article" date="2007" name="ISME J.">
        <title>Population level functional diversity in a microbial community revealed by comparative genomic and metagenomic analyses.</title>
        <authorList>
            <person name="Bhaya D."/>
            <person name="Grossman A.R."/>
            <person name="Steunou A.-S."/>
            <person name="Khuri N."/>
            <person name="Cohan F.M."/>
            <person name="Hamamura N."/>
            <person name="Melendrez M.C."/>
            <person name="Bateson M.M."/>
            <person name="Ward D.M."/>
            <person name="Heidelberg J.F."/>
        </authorList>
    </citation>
    <scope>NUCLEOTIDE SEQUENCE [LARGE SCALE GENOMIC DNA]</scope>
    <source>
        <strain>JA-3-3Ab</strain>
    </source>
</reference>
<dbReference type="EMBL" id="CP000239">
    <property type="protein sequence ID" value="ABC98919.1"/>
    <property type="molecule type" value="Genomic_DNA"/>
</dbReference>
<dbReference type="SMR" id="Q2JWE4"/>
<dbReference type="STRING" id="321327.CYA_0708"/>
<dbReference type="KEGG" id="cya:CYA_0708"/>
<dbReference type="eggNOG" id="COG0792">
    <property type="taxonomic scope" value="Bacteria"/>
</dbReference>
<dbReference type="HOGENOM" id="CLU_115353_3_0_3"/>
<dbReference type="OrthoDB" id="9802516at2"/>
<dbReference type="Proteomes" id="UP000008818">
    <property type="component" value="Chromosome"/>
</dbReference>
<dbReference type="GO" id="GO:0003676">
    <property type="term" value="F:nucleic acid binding"/>
    <property type="evidence" value="ECO:0007669"/>
    <property type="project" value="InterPro"/>
</dbReference>
<dbReference type="CDD" id="cd20736">
    <property type="entry name" value="PoNe_Nuclease"/>
    <property type="match status" value="1"/>
</dbReference>
<dbReference type="Gene3D" id="3.40.1350.10">
    <property type="match status" value="1"/>
</dbReference>
<dbReference type="HAMAP" id="MF_00048">
    <property type="entry name" value="UPF0102"/>
    <property type="match status" value="1"/>
</dbReference>
<dbReference type="InterPro" id="IPR011335">
    <property type="entry name" value="Restrct_endonuc-II-like"/>
</dbReference>
<dbReference type="InterPro" id="IPR011856">
    <property type="entry name" value="tRNA_endonuc-like_dom_sf"/>
</dbReference>
<dbReference type="InterPro" id="IPR003509">
    <property type="entry name" value="UPF0102_YraN-like"/>
</dbReference>
<dbReference type="NCBIfam" id="NF009150">
    <property type="entry name" value="PRK12497.1-3"/>
    <property type="match status" value="1"/>
</dbReference>
<dbReference type="NCBIfam" id="TIGR00252">
    <property type="entry name" value="YraN family protein"/>
    <property type="match status" value="1"/>
</dbReference>
<dbReference type="PANTHER" id="PTHR34039">
    <property type="entry name" value="UPF0102 PROTEIN YRAN"/>
    <property type="match status" value="1"/>
</dbReference>
<dbReference type="PANTHER" id="PTHR34039:SF1">
    <property type="entry name" value="UPF0102 PROTEIN YRAN"/>
    <property type="match status" value="1"/>
</dbReference>
<dbReference type="Pfam" id="PF02021">
    <property type="entry name" value="UPF0102"/>
    <property type="match status" value="1"/>
</dbReference>
<dbReference type="SUPFAM" id="SSF52980">
    <property type="entry name" value="Restriction endonuclease-like"/>
    <property type="match status" value="1"/>
</dbReference>
<organism>
    <name type="scientific">Synechococcus sp. (strain JA-3-3Ab)</name>
    <name type="common">Cyanobacteria bacterium Yellowstone A-Prime</name>
    <dbReference type="NCBI Taxonomy" id="321327"/>
    <lineage>
        <taxon>Bacteria</taxon>
        <taxon>Bacillati</taxon>
        <taxon>Cyanobacteriota</taxon>
        <taxon>Cyanophyceae</taxon>
        <taxon>Synechococcales</taxon>
        <taxon>Synechococcaceae</taxon>
        <taxon>Synechococcus</taxon>
    </lineage>
</organism>
<gene>
    <name type="ordered locus">CYA_0708</name>
</gene>
<accession>Q2JWE4</accession>
<evidence type="ECO:0000255" key="1">
    <source>
        <dbReference type="HAMAP-Rule" id="MF_00048"/>
    </source>
</evidence>
<proteinExistence type="inferred from homology"/>
<sequence>MPKRTSLQNMGEAGEACVRQYLEEQGWQILAQQWRCRWGELDLVASRAGELIFVEVKTRSGQGWDQKGLLAVGIQKQQRLIRAAQAFLSQHPDLAELACRFDVALVEQRPGKEGVSYALADYLQGAFELWE</sequence>
<feature type="chain" id="PRO_0000336273" description="UPF0102 protein CYA_0708">
    <location>
        <begin position="1"/>
        <end position="131"/>
    </location>
</feature>
<protein>
    <recommendedName>
        <fullName evidence="1">UPF0102 protein CYA_0708</fullName>
    </recommendedName>
</protein>
<name>Y708_SYNJA</name>